<accession>B7H0A1</accession>
<reference key="1">
    <citation type="journal article" date="2008" name="J. Bacteriol.">
        <title>Comparative genome sequence analysis of multidrug-resistant Acinetobacter baumannii.</title>
        <authorList>
            <person name="Adams M.D."/>
            <person name="Goglin K."/>
            <person name="Molyneaux N."/>
            <person name="Hujer K.M."/>
            <person name="Lavender H."/>
            <person name="Jamison J.J."/>
            <person name="MacDonald I.J."/>
            <person name="Martin K.M."/>
            <person name="Russo T."/>
            <person name="Campagnari A.A."/>
            <person name="Hujer A.M."/>
            <person name="Bonomo R.A."/>
            <person name="Gill S.R."/>
        </authorList>
    </citation>
    <scope>NUCLEOTIDE SEQUENCE [LARGE SCALE GENOMIC DNA]</scope>
    <source>
        <strain>AB307-0294</strain>
    </source>
</reference>
<comment type="function">
    <text evidence="1">Pyrophosphatase that catalyzes the hydrolysis of nucleoside triphosphates to their monophosphate derivatives, with a high preference for the non-canonical purine nucleotides XTP (xanthosine triphosphate), dITP (deoxyinosine triphosphate) and ITP. Seems to function as a house-cleaning enzyme that removes non-canonical purine nucleotides from the nucleotide pool, thus preventing their incorporation into DNA/RNA and avoiding chromosomal lesions.</text>
</comment>
<comment type="catalytic activity">
    <reaction evidence="1">
        <text>XTP + H2O = XMP + diphosphate + H(+)</text>
        <dbReference type="Rhea" id="RHEA:28610"/>
        <dbReference type="ChEBI" id="CHEBI:15377"/>
        <dbReference type="ChEBI" id="CHEBI:15378"/>
        <dbReference type="ChEBI" id="CHEBI:33019"/>
        <dbReference type="ChEBI" id="CHEBI:57464"/>
        <dbReference type="ChEBI" id="CHEBI:61314"/>
        <dbReference type="EC" id="3.6.1.66"/>
    </reaction>
</comment>
<comment type="catalytic activity">
    <reaction evidence="1">
        <text>dITP + H2O = dIMP + diphosphate + H(+)</text>
        <dbReference type="Rhea" id="RHEA:28342"/>
        <dbReference type="ChEBI" id="CHEBI:15377"/>
        <dbReference type="ChEBI" id="CHEBI:15378"/>
        <dbReference type="ChEBI" id="CHEBI:33019"/>
        <dbReference type="ChEBI" id="CHEBI:61194"/>
        <dbReference type="ChEBI" id="CHEBI:61382"/>
        <dbReference type="EC" id="3.6.1.66"/>
    </reaction>
</comment>
<comment type="catalytic activity">
    <reaction evidence="1">
        <text>ITP + H2O = IMP + diphosphate + H(+)</text>
        <dbReference type="Rhea" id="RHEA:29399"/>
        <dbReference type="ChEBI" id="CHEBI:15377"/>
        <dbReference type="ChEBI" id="CHEBI:15378"/>
        <dbReference type="ChEBI" id="CHEBI:33019"/>
        <dbReference type="ChEBI" id="CHEBI:58053"/>
        <dbReference type="ChEBI" id="CHEBI:61402"/>
        <dbReference type="EC" id="3.6.1.66"/>
    </reaction>
</comment>
<comment type="cofactor">
    <cofactor evidence="1">
        <name>Mg(2+)</name>
        <dbReference type="ChEBI" id="CHEBI:18420"/>
    </cofactor>
    <text evidence="1">Binds 1 Mg(2+) ion per subunit.</text>
</comment>
<comment type="subunit">
    <text evidence="1">Homodimer.</text>
</comment>
<comment type="similarity">
    <text evidence="1">Belongs to the HAM1 NTPase family.</text>
</comment>
<evidence type="ECO:0000255" key="1">
    <source>
        <dbReference type="HAMAP-Rule" id="MF_01405"/>
    </source>
</evidence>
<dbReference type="EC" id="3.6.1.66" evidence="1"/>
<dbReference type="EMBL" id="CP001172">
    <property type="protein sequence ID" value="ACJ57400.1"/>
    <property type="molecule type" value="Genomic_DNA"/>
</dbReference>
<dbReference type="SMR" id="B7H0A1"/>
<dbReference type="HOGENOM" id="CLU_082080_0_3_6"/>
<dbReference type="Proteomes" id="UP000006924">
    <property type="component" value="Chromosome"/>
</dbReference>
<dbReference type="GO" id="GO:0005829">
    <property type="term" value="C:cytosol"/>
    <property type="evidence" value="ECO:0007669"/>
    <property type="project" value="TreeGrafter"/>
</dbReference>
<dbReference type="GO" id="GO:0035870">
    <property type="term" value="F:dITP diphosphatase activity"/>
    <property type="evidence" value="ECO:0007669"/>
    <property type="project" value="RHEA"/>
</dbReference>
<dbReference type="GO" id="GO:0036220">
    <property type="term" value="F:ITP diphosphatase activity"/>
    <property type="evidence" value="ECO:0007669"/>
    <property type="project" value="UniProtKB-EC"/>
</dbReference>
<dbReference type="GO" id="GO:0046872">
    <property type="term" value="F:metal ion binding"/>
    <property type="evidence" value="ECO:0007669"/>
    <property type="project" value="UniProtKB-KW"/>
</dbReference>
<dbReference type="GO" id="GO:0000166">
    <property type="term" value="F:nucleotide binding"/>
    <property type="evidence" value="ECO:0007669"/>
    <property type="project" value="UniProtKB-KW"/>
</dbReference>
<dbReference type="GO" id="GO:0017111">
    <property type="term" value="F:ribonucleoside triphosphate phosphatase activity"/>
    <property type="evidence" value="ECO:0007669"/>
    <property type="project" value="InterPro"/>
</dbReference>
<dbReference type="GO" id="GO:0036222">
    <property type="term" value="F:XTP diphosphatase activity"/>
    <property type="evidence" value="ECO:0007669"/>
    <property type="project" value="RHEA"/>
</dbReference>
<dbReference type="GO" id="GO:0009117">
    <property type="term" value="P:nucleotide metabolic process"/>
    <property type="evidence" value="ECO:0007669"/>
    <property type="project" value="UniProtKB-KW"/>
</dbReference>
<dbReference type="GO" id="GO:0009146">
    <property type="term" value="P:purine nucleoside triphosphate catabolic process"/>
    <property type="evidence" value="ECO:0007669"/>
    <property type="project" value="UniProtKB-UniRule"/>
</dbReference>
<dbReference type="CDD" id="cd00515">
    <property type="entry name" value="HAM1"/>
    <property type="match status" value="1"/>
</dbReference>
<dbReference type="FunFam" id="3.90.950.10:FF:000001">
    <property type="entry name" value="dITP/XTP pyrophosphatase"/>
    <property type="match status" value="1"/>
</dbReference>
<dbReference type="Gene3D" id="3.90.950.10">
    <property type="match status" value="1"/>
</dbReference>
<dbReference type="HAMAP" id="MF_01405">
    <property type="entry name" value="Non_canon_purine_NTPase"/>
    <property type="match status" value="1"/>
</dbReference>
<dbReference type="InterPro" id="IPR020922">
    <property type="entry name" value="dITP/XTP_pyrophosphatase"/>
</dbReference>
<dbReference type="InterPro" id="IPR029001">
    <property type="entry name" value="ITPase-like_fam"/>
</dbReference>
<dbReference type="InterPro" id="IPR002637">
    <property type="entry name" value="RdgB/HAM1"/>
</dbReference>
<dbReference type="NCBIfam" id="TIGR00042">
    <property type="entry name" value="RdgB/HAM1 family non-canonical purine NTP pyrophosphatase"/>
    <property type="match status" value="1"/>
</dbReference>
<dbReference type="PANTHER" id="PTHR11067:SF9">
    <property type="entry name" value="INOSINE TRIPHOSPHATE PYROPHOSPHATASE"/>
    <property type="match status" value="1"/>
</dbReference>
<dbReference type="PANTHER" id="PTHR11067">
    <property type="entry name" value="INOSINE TRIPHOSPHATE PYROPHOSPHATASE/HAM1 PROTEIN"/>
    <property type="match status" value="1"/>
</dbReference>
<dbReference type="Pfam" id="PF01725">
    <property type="entry name" value="Ham1p_like"/>
    <property type="match status" value="1"/>
</dbReference>
<dbReference type="SUPFAM" id="SSF52972">
    <property type="entry name" value="ITPase-like"/>
    <property type="match status" value="1"/>
</dbReference>
<organism>
    <name type="scientific">Acinetobacter baumannii (strain AB307-0294)</name>
    <dbReference type="NCBI Taxonomy" id="557600"/>
    <lineage>
        <taxon>Bacteria</taxon>
        <taxon>Pseudomonadati</taxon>
        <taxon>Pseudomonadota</taxon>
        <taxon>Gammaproteobacteria</taxon>
        <taxon>Moraxellales</taxon>
        <taxon>Moraxellaceae</taxon>
        <taxon>Acinetobacter</taxon>
        <taxon>Acinetobacter calcoaceticus/baumannii complex</taxon>
    </lineage>
</organism>
<proteinExistence type="inferred from homology"/>
<sequence>MSTPHWFDQGSLVLASNNKGKVAEFEKLFEQLKLPVEIIPQGRLNIPDAIEDGLSFIENAIIKARHASKISGKPAMADDSGICVPVLGGAPGIYSARYAGEHGDDAANNAKLLNDLLPFRKNGEAIEGMFVCVLALVTHAEDPLPQIFQGIWHGEILEAPRGENGFGYDPLFWLPELQVSSAELSKEDKNKISHRGQAMQLFRESLQK</sequence>
<gene>
    <name type="ordered locus">ABBFA_003065</name>
</gene>
<name>IXTPA_ACIB3</name>
<keyword id="KW-0378">Hydrolase</keyword>
<keyword id="KW-0460">Magnesium</keyword>
<keyword id="KW-0479">Metal-binding</keyword>
<keyword id="KW-0546">Nucleotide metabolism</keyword>
<keyword id="KW-0547">Nucleotide-binding</keyword>
<protein>
    <recommendedName>
        <fullName evidence="1">dITP/XTP pyrophosphatase</fullName>
        <ecNumber evidence="1">3.6.1.66</ecNumber>
    </recommendedName>
    <alternativeName>
        <fullName evidence="1">Non-canonical purine NTP pyrophosphatase</fullName>
    </alternativeName>
    <alternativeName>
        <fullName evidence="1">Non-standard purine NTP pyrophosphatase</fullName>
    </alternativeName>
    <alternativeName>
        <fullName evidence="1">Nucleoside-triphosphate diphosphatase</fullName>
    </alternativeName>
    <alternativeName>
        <fullName evidence="1">Nucleoside-triphosphate pyrophosphatase</fullName>
        <shortName evidence="1">NTPase</shortName>
    </alternativeName>
</protein>
<feature type="chain" id="PRO_1000145476" description="dITP/XTP pyrophosphatase">
    <location>
        <begin position="1"/>
        <end position="208"/>
    </location>
</feature>
<feature type="active site" description="Proton acceptor" evidence="1">
    <location>
        <position position="79"/>
    </location>
</feature>
<feature type="binding site" evidence="1">
    <location>
        <begin position="16"/>
        <end position="21"/>
    </location>
    <ligand>
        <name>substrate</name>
    </ligand>
</feature>
<feature type="binding site" evidence="1">
    <location>
        <position position="79"/>
    </location>
    <ligand>
        <name>Mg(2+)</name>
        <dbReference type="ChEBI" id="CHEBI:18420"/>
    </ligand>
</feature>
<feature type="binding site" evidence="1">
    <location>
        <position position="80"/>
    </location>
    <ligand>
        <name>substrate</name>
    </ligand>
</feature>
<feature type="binding site" evidence="1">
    <location>
        <begin position="166"/>
        <end position="169"/>
    </location>
    <ligand>
        <name>substrate</name>
    </ligand>
</feature>
<feature type="binding site" evidence="1">
    <location>
        <position position="189"/>
    </location>
    <ligand>
        <name>substrate</name>
    </ligand>
</feature>
<feature type="binding site" evidence="1">
    <location>
        <begin position="194"/>
        <end position="195"/>
    </location>
    <ligand>
        <name>substrate</name>
    </ligand>
</feature>